<protein>
    <recommendedName>
        <fullName evidence="1">tRNA modification GTPase MnmE</fullName>
        <ecNumber evidence="1">3.6.-.-</ecNumber>
    </recommendedName>
</protein>
<reference key="1">
    <citation type="journal article" date="2005" name="J. Bacteriol.">
        <title>Insights on evolution of virulence and resistance from the complete genome analysis of an early methicillin-resistant Staphylococcus aureus strain and a biofilm-producing methicillin-resistant Staphylococcus epidermidis strain.</title>
        <authorList>
            <person name="Gill S.R."/>
            <person name="Fouts D.E."/>
            <person name="Archer G.L."/>
            <person name="Mongodin E.F."/>
            <person name="DeBoy R.T."/>
            <person name="Ravel J."/>
            <person name="Paulsen I.T."/>
            <person name="Kolonay J.F."/>
            <person name="Brinkac L.M."/>
            <person name="Beanan M.J."/>
            <person name="Dodson R.J."/>
            <person name="Daugherty S.C."/>
            <person name="Madupu R."/>
            <person name="Angiuoli S.V."/>
            <person name="Durkin A.S."/>
            <person name="Haft D.H."/>
            <person name="Vamathevan J.J."/>
            <person name="Khouri H."/>
            <person name="Utterback T.R."/>
            <person name="Lee C."/>
            <person name="Dimitrov G."/>
            <person name="Jiang L."/>
            <person name="Qin H."/>
            <person name="Weidman J."/>
            <person name="Tran K."/>
            <person name="Kang K.H."/>
            <person name="Hance I.R."/>
            <person name="Nelson K.E."/>
            <person name="Fraser C.M."/>
        </authorList>
    </citation>
    <scope>NUCLEOTIDE SEQUENCE [LARGE SCALE GENOMIC DNA]</scope>
    <source>
        <strain>COL</strain>
    </source>
</reference>
<name>MNME_STAAC</name>
<keyword id="KW-0963">Cytoplasm</keyword>
<keyword id="KW-0342">GTP-binding</keyword>
<keyword id="KW-0378">Hydrolase</keyword>
<keyword id="KW-0460">Magnesium</keyword>
<keyword id="KW-0479">Metal-binding</keyword>
<keyword id="KW-0547">Nucleotide-binding</keyword>
<keyword id="KW-0630">Potassium</keyword>
<keyword id="KW-0819">tRNA processing</keyword>
<comment type="function">
    <text evidence="1">Exhibits a very high intrinsic GTPase hydrolysis rate. Involved in the addition of a carboxymethylaminomethyl (cmnm) group at the wobble position (U34) of certain tRNAs, forming tRNA-cmnm(5)s(2)U34.</text>
</comment>
<comment type="cofactor">
    <cofactor evidence="1">
        <name>K(+)</name>
        <dbReference type="ChEBI" id="CHEBI:29103"/>
    </cofactor>
    <text evidence="1">Binds 1 potassium ion per subunit.</text>
</comment>
<comment type="subunit">
    <text evidence="1">Homodimer. Heterotetramer of two MnmE and two MnmG subunits.</text>
</comment>
<comment type="subcellular location">
    <subcellularLocation>
        <location evidence="1">Cytoplasm</location>
    </subcellularLocation>
</comment>
<comment type="similarity">
    <text evidence="1">Belongs to the TRAFAC class TrmE-Era-EngA-EngB-Septin-like GTPase superfamily. TrmE GTPase family.</text>
</comment>
<dbReference type="EC" id="3.6.-.-" evidence="1"/>
<dbReference type="EMBL" id="CP000046">
    <property type="protein sequence ID" value="AAW37386.1"/>
    <property type="molecule type" value="Genomic_DNA"/>
</dbReference>
<dbReference type="RefSeq" id="WP_000362503.1">
    <property type="nucleotide sequence ID" value="NZ_JBGOFO010000001.1"/>
</dbReference>
<dbReference type="SMR" id="Q5HCI3"/>
<dbReference type="KEGG" id="sac:SACOL2738"/>
<dbReference type="HOGENOM" id="CLU_019624_4_1_9"/>
<dbReference type="Proteomes" id="UP000000530">
    <property type="component" value="Chromosome"/>
</dbReference>
<dbReference type="GO" id="GO:0005829">
    <property type="term" value="C:cytosol"/>
    <property type="evidence" value="ECO:0007669"/>
    <property type="project" value="TreeGrafter"/>
</dbReference>
<dbReference type="GO" id="GO:0005525">
    <property type="term" value="F:GTP binding"/>
    <property type="evidence" value="ECO:0007669"/>
    <property type="project" value="UniProtKB-UniRule"/>
</dbReference>
<dbReference type="GO" id="GO:0003924">
    <property type="term" value="F:GTPase activity"/>
    <property type="evidence" value="ECO:0007669"/>
    <property type="project" value="UniProtKB-UniRule"/>
</dbReference>
<dbReference type="GO" id="GO:0046872">
    <property type="term" value="F:metal ion binding"/>
    <property type="evidence" value="ECO:0007669"/>
    <property type="project" value="UniProtKB-KW"/>
</dbReference>
<dbReference type="GO" id="GO:0030488">
    <property type="term" value="P:tRNA methylation"/>
    <property type="evidence" value="ECO:0007669"/>
    <property type="project" value="TreeGrafter"/>
</dbReference>
<dbReference type="GO" id="GO:0002098">
    <property type="term" value="P:tRNA wobble uridine modification"/>
    <property type="evidence" value="ECO:0007669"/>
    <property type="project" value="TreeGrafter"/>
</dbReference>
<dbReference type="CDD" id="cd04164">
    <property type="entry name" value="trmE"/>
    <property type="match status" value="1"/>
</dbReference>
<dbReference type="CDD" id="cd14858">
    <property type="entry name" value="TrmE_N"/>
    <property type="match status" value="1"/>
</dbReference>
<dbReference type="FunFam" id="3.30.1360.120:FF:000003">
    <property type="entry name" value="tRNA modification GTPase MnmE"/>
    <property type="match status" value="1"/>
</dbReference>
<dbReference type="FunFam" id="3.40.50.300:FF:000494">
    <property type="entry name" value="tRNA modification GTPase MnmE"/>
    <property type="match status" value="1"/>
</dbReference>
<dbReference type="Gene3D" id="3.40.50.300">
    <property type="entry name" value="P-loop containing nucleotide triphosphate hydrolases"/>
    <property type="match status" value="1"/>
</dbReference>
<dbReference type="Gene3D" id="3.30.1360.120">
    <property type="entry name" value="Probable tRNA modification gtpase trme, domain 1"/>
    <property type="match status" value="1"/>
</dbReference>
<dbReference type="Gene3D" id="1.20.120.430">
    <property type="entry name" value="tRNA modification GTPase MnmE domain 2"/>
    <property type="match status" value="1"/>
</dbReference>
<dbReference type="HAMAP" id="MF_00379">
    <property type="entry name" value="GTPase_MnmE"/>
    <property type="match status" value="1"/>
</dbReference>
<dbReference type="InterPro" id="IPR031168">
    <property type="entry name" value="G_TrmE"/>
</dbReference>
<dbReference type="InterPro" id="IPR006073">
    <property type="entry name" value="GTP-bd"/>
</dbReference>
<dbReference type="InterPro" id="IPR018948">
    <property type="entry name" value="GTP-bd_TrmE_N"/>
</dbReference>
<dbReference type="InterPro" id="IPR004520">
    <property type="entry name" value="GTPase_MnmE"/>
</dbReference>
<dbReference type="InterPro" id="IPR027368">
    <property type="entry name" value="MnmE_dom2"/>
</dbReference>
<dbReference type="InterPro" id="IPR025867">
    <property type="entry name" value="MnmE_helical"/>
</dbReference>
<dbReference type="InterPro" id="IPR027417">
    <property type="entry name" value="P-loop_NTPase"/>
</dbReference>
<dbReference type="InterPro" id="IPR005225">
    <property type="entry name" value="Small_GTP-bd"/>
</dbReference>
<dbReference type="InterPro" id="IPR027266">
    <property type="entry name" value="TrmE/GcvT_dom1"/>
</dbReference>
<dbReference type="NCBIfam" id="TIGR00450">
    <property type="entry name" value="mnmE_trmE_thdF"/>
    <property type="match status" value="1"/>
</dbReference>
<dbReference type="NCBIfam" id="NF003661">
    <property type="entry name" value="PRK05291.1-3"/>
    <property type="match status" value="1"/>
</dbReference>
<dbReference type="NCBIfam" id="TIGR00231">
    <property type="entry name" value="small_GTP"/>
    <property type="match status" value="1"/>
</dbReference>
<dbReference type="PANTHER" id="PTHR42714">
    <property type="entry name" value="TRNA MODIFICATION GTPASE GTPBP3"/>
    <property type="match status" value="1"/>
</dbReference>
<dbReference type="PANTHER" id="PTHR42714:SF2">
    <property type="entry name" value="TRNA MODIFICATION GTPASE GTPBP3, MITOCHONDRIAL"/>
    <property type="match status" value="1"/>
</dbReference>
<dbReference type="Pfam" id="PF01926">
    <property type="entry name" value="MMR_HSR1"/>
    <property type="match status" value="1"/>
</dbReference>
<dbReference type="Pfam" id="PF12631">
    <property type="entry name" value="MnmE_helical"/>
    <property type="match status" value="1"/>
</dbReference>
<dbReference type="Pfam" id="PF10396">
    <property type="entry name" value="TrmE_N"/>
    <property type="match status" value="1"/>
</dbReference>
<dbReference type="PRINTS" id="PR00449">
    <property type="entry name" value="RASTRNSFRMNG"/>
</dbReference>
<dbReference type="SUPFAM" id="SSF52540">
    <property type="entry name" value="P-loop containing nucleoside triphosphate hydrolases"/>
    <property type="match status" value="1"/>
</dbReference>
<dbReference type="SUPFAM" id="SSF116878">
    <property type="entry name" value="TrmE connector domain"/>
    <property type="match status" value="1"/>
</dbReference>
<dbReference type="PROSITE" id="PS51709">
    <property type="entry name" value="G_TRME"/>
    <property type="match status" value="1"/>
</dbReference>
<sequence>MDLDTITSISTPMGEGAIGIVRLSGPQAVEIADKLYKGKHLLNDVPSHTINYGHIIDPESKEVIEEVMVSVLRAPKTFTREDIIEINCHGGILTINRVLELTMTYGARMAEPGEFTKRAFLNGRIDLSQAEAVMDFIRSKTDRASKVAMNQIEGRLSDLIKKQRQSILEILAQVEVNIDYPEYDDVEDATTEFLLEQSKEIKQEINRLLDTGAQGKIMREGLSTVIVGKPNVGKSSMLNNLIQDNKAIVTEVAGTTRDVLEEYVNVRGVPLRLVDTAGIRETEDIVEKIGVERSRKALSQADLILFVLNNNEALTQEDYTLYEVVKNEDVIVIVNKMDLEQNIDINEVKDMIGDTPLIQTSMLKQEGIDELEIQIRDLFFGGEVQNQDMTYVSNSRHISLLKQARQTIQDAIDAAESGVPMDMVQIDLTRTWEILGEIIGETASDELIDQLFSQFCLGK</sequence>
<evidence type="ECO:0000255" key="1">
    <source>
        <dbReference type="HAMAP-Rule" id="MF_00379"/>
    </source>
</evidence>
<gene>
    <name evidence="1" type="primary">mnmE</name>
    <name evidence="1" type="synonym">trmE</name>
    <name type="ordered locus">SACOL2738</name>
</gene>
<organism>
    <name type="scientific">Staphylococcus aureus (strain COL)</name>
    <dbReference type="NCBI Taxonomy" id="93062"/>
    <lineage>
        <taxon>Bacteria</taxon>
        <taxon>Bacillati</taxon>
        <taxon>Bacillota</taxon>
        <taxon>Bacilli</taxon>
        <taxon>Bacillales</taxon>
        <taxon>Staphylococcaceae</taxon>
        <taxon>Staphylococcus</taxon>
    </lineage>
</organism>
<accession>Q5HCI3</accession>
<proteinExistence type="inferred from homology"/>
<feature type="chain" id="PRO_0000188915" description="tRNA modification GTPase MnmE">
    <location>
        <begin position="1"/>
        <end position="459"/>
    </location>
</feature>
<feature type="domain" description="TrmE-type G">
    <location>
        <begin position="221"/>
        <end position="380"/>
    </location>
</feature>
<feature type="binding site" evidence="1">
    <location>
        <position position="22"/>
    </location>
    <ligand>
        <name>(6S)-5-formyl-5,6,7,8-tetrahydrofolate</name>
        <dbReference type="ChEBI" id="CHEBI:57457"/>
    </ligand>
</feature>
<feature type="binding site" evidence="1">
    <location>
        <position position="85"/>
    </location>
    <ligand>
        <name>(6S)-5-formyl-5,6,7,8-tetrahydrofolate</name>
        <dbReference type="ChEBI" id="CHEBI:57457"/>
    </ligand>
</feature>
<feature type="binding site" evidence="1">
    <location>
        <position position="124"/>
    </location>
    <ligand>
        <name>(6S)-5-formyl-5,6,7,8-tetrahydrofolate</name>
        <dbReference type="ChEBI" id="CHEBI:57457"/>
    </ligand>
</feature>
<feature type="binding site" evidence="1">
    <location>
        <begin position="231"/>
        <end position="236"/>
    </location>
    <ligand>
        <name>GTP</name>
        <dbReference type="ChEBI" id="CHEBI:37565"/>
    </ligand>
</feature>
<feature type="binding site" evidence="1">
    <location>
        <position position="231"/>
    </location>
    <ligand>
        <name>K(+)</name>
        <dbReference type="ChEBI" id="CHEBI:29103"/>
    </ligand>
</feature>
<feature type="binding site" evidence="1">
    <location>
        <position position="235"/>
    </location>
    <ligand>
        <name>Mg(2+)</name>
        <dbReference type="ChEBI" id="CHEBI:18420"/>
    </ligand>
</feature>
<feature type="binding site" evidence="1">
    <location>
        <begin position="250"/>
        <end position="256"/>
    </location>
    <ligand>
        <name>GTP</name>
        <dbReference type="ChEBI" id="CHEBI:37565"/>
    </ligand>
</feature>
<feature type="binding site" evidence="1">
    <location>
        <position position="250"/>
    </location>
    <ligand>
        <name>K(+)</name>
        <dbReference type="ChEBI" id="CHEBI:29103"/>
    </ligand>
</feature>
<feature type="binding site" evidence="1">
    <location>
        <position position="252"/>
    </location>
    <ligand>
        <name>K(+)</name>
        <dbReference type="ChEBI" id="CHEBI:29103"/>
    </ligand>
</feature>
<feature type="binding site" evidence="1">
    <location>
        <position position="255"/>
    </location>
    <ligand>
        <name>K(+)</name>
        <dbReference type="ChEBI" id="CHEBI:29103"/>
    </ligand>
</feature>
<feature type="binding site" evidence="1">
    <location>
        <position position="256"/>
    </location>
    <ligand>
        <name>Mg(2+)</name>
        <dbReference type="ChEBI" id="CHEBI:18420"/>
    </ligand>
</feature>
<feature type="binding site" evidence="1">
    <location>
        <begin position="275"/>
        <end position="278"/>
    </location>
    <ligand>
        <name>GTP</name>
        <dbReference type="ChEBI" id="CHEBI:37565"/>
    </ligand>
</feature>
<feature type="binding site" evidence="1">
    <location>
        <position position="459"/>
    </location>
    <ligand>
        <name>(6S)-5-formyl-5,6,7,8-tetrahydrofolate</name>
        <dbReference type="ChEBI" id="CHEBI:57457"/>
    </ligand>
</feature>